<accession>P22462</accession>
<accession>P22461</accession>
<accession>P22463</accession>
<accession>Q63735</accession>
<gene>
    <name evidence="29" type="primary">Kcnc2</name>
</gene>
<protein>
    <recommendedName>
        <fullName evidence="26">Voltage-gated potassium channel KCNC2</fullName>
    </recommendedName>
    <alternativeName>
        <fullName evidence="29">Potassium channel voltage-gated Shaw-related subfamily C member 2</fullName>
    </alternativeName>
    <alternativeName>
        <fullName evidence="29">Potassium voltage-gated channel subfamily C member 2</fullName>
    </alternativeName>
    <alternativeName>
        <fullName evidence="24">Shaw-like potassium channel</fullName>
    </alternativeName>
    <alternativeName>
        <fullName evidence="24">Voltage-gated potassium channel subunit Kv3.2</fullName>
    </alternativeName>
</protein>
<comment type="function">
    <text evidence="4 8 9 10 11 13 17 18 19 20 21 27 28">Voltage-gated potassium channel that mediates transmembrane potassium transport in excitable membranes, primarily in the brain. Contributes to the regulation of the fast action potential repolarization and in sustained high-frequency firing in neurons of the central nervous system (PubMed:10414968, PubMed:10482766, PubMed:11506885, PubMed:22831914). Homotetramer channels mediate delayed-rectifier voltage-dependent potassium currents that activate rapidly at high-threshold voltages and inactivate slowly (PubMed:10414303, PubMed:10482766, PubMed:11281123, PubMed:14679187, PubMed:1879548, PubMed:2367536, PubMed:7643197, PubMed:8120636). Forms tetrameric channels through which potassium ions pass in accordance with their electrochemical gradient. The channel alternates between opened and closed conformations in response to the voltage difference across the membrane (PubMed:1879548, PubMed:2367536, PubMed:7643197, PubMed:8120636). Can form functional homotetrameric channels and heterotetrameric channels that contain variable proportions of KCNC1, and possibly other family members as well; channel properties depend on the type of alpha subunits that are part of the channel (PubMed:10482766, PubMed:14679187). Channel properties may be modulated either by the association with ancillary subunits, such as KCNE1, KCNE2 and KCNE3 or indirectly by nitric oxide (NO) through a cGMP- and PKG-mediated signaling cascade, slowing channel activation and deactivation of delayed rectifier potassium channels (PubMed:11281123, PubMed:14679187). Contributes to fire sustained trains of very brief action potentials at high frequency in retinal ganglion cells, thalamocortical and suprachiasmatic nucleus (SCN) neurons and in hippocampal and neocortical interneurons (PubMed:10414968, PubMed:10482766, PubMed:11506885, PubMed:22831914). Sustained maximal action potential firing frequency in inhibitory hippocampal interneurons is negatively modulated by histamine H2 receptor activation in a cAMP- and protein kinase (PKA) phosphorylation-dependent manner. Plays a role in maintaining the fidelity of synaptic transmission in neocortical GABAergic interneurons by generating action potential (AP) repolarization at nerve terminals, thus reducing spike-evoked calcium influx and GABA neurotransmitter release. Required for long-range synchronization of gamma oscillations over distance in the neocortex. Contributes to the modulation of the circadian rhythm of spontaneous action potential firing in suprachiasmatic nucleus (SCN) neurons in a light-dependent manner (By similarity).</text>
</comment>
<comment type="catalytic activity">
    <reaction evidence="9 10 13 17 19 20 21">
        <text>K(+)(in) = K(+)(out)</text>
        <dbReference type="Rhea" id="RHEA:29463"/>
        <dbReference type="ChEBI" id="CHEBI:29103"/>
    </reaction>
</comment>
<comment type="activity regulation">
    <text evidence="5 9 17 19 20 27">Inhibited by Stichodactyla helianthus peptide ShK (By similarity). Inhibited by millimolar levels of tetraethylammonium (TEA). Contrary to other channels, inhibited only by millimolar levels of 4-aminopyridine (4-AP) (PubMed:10414303, PubMed:10482766, PubMed:1879548, PubMed:2367536, PubMed:7643197).</text>
</comment>
<comment type="biophysicochemical properties">
    <kinetics>
        <text evidence="10 13 17 19 20 21 27">Homotetrameric channels expressed in xenopus oocytes or in mammalian non-neuronal cells display delayed-rectifier voltage-dependent potassium currents, that are rapidly activated during membrane depolarization, i.e within a risetime of a few msec. After that, inactivates very slowly, i.e within about &gt;800 msec. Their activation requires a threshold potential at about -10 mV, with a midpoint activation at about 12.1 mV and a steepness parameter of about 8.4 mV (PubMed:10414303, PubMed:11281123, PubMed:14679187, PubMed:1879548, PubMed:2367536, PubMed:7643197, PubMed:8120636). The voltage-dependence of activation and inactivation and other channel characteristics vary depending on the experimental conditions, the expression system, the presence or absence of ancillary subunits and post-translational modifications (PubMed:10414303, PubMed:11281123, PubMed:14679187, PubMed:7643197).</text>
    </kinetics>
</comment>
<comment type="subunit">
    <text evidence="9 13">Homotetramer and heterotetramer with other channel-forming alpha subunits, such as KCNC1. Interacts with KCNC1 (PubMed:10482766, PubMed:14679187). Homotetramer or heterotetramer channel activity is regulated by association with modulating ancillary subunits such as KCNE1, KCNE2 and KCNE3, creating a functionally diverse range of channel complexes. Interacts with KCNE1, KCNE2 and KCNE3 (PubMed:14679187).</text>
</comment>
<comment type="subcellular location">
    <subcellularLocation>
        <location evidence="8 9 13 18 20">Cell membrane</location>
        <topology evidence="6">Multi-pass membrane protein</topology>
    </subcellularLocation>
    <subcellularLocation>
        <location evidence="10">Membrane</location>
        <topology evidence="6">Multi-pass membrane protein</topology>
    </subcellularLocation>
    <subcellularLocation>
        <location evidence="9">Perikaryon</location>
    </subcellularLocation>
    <subcellularLocation>
        <location evidence="20">Cell projection</location>
        <location evidence="20">Axon</location>
    </subcellularLocation>
    <subcellularLocation>
        <location evidence="20">Synapse</location>
    </subcellularLocation>
    <subcellularLocation>
        <location evidence="20">Synapse</location>
        <location evidence="20">Synaptosome</location>
    </subcellularLocation>
    <subcellularLocation>
        <location evidence="4">Cell projection</location>
        <location evidence="4">Dendrite</location>
    </subcellularLocation>
    <subcellularLocation>
        <location evidence="4">Postsynaptic cell membrane</location>
    </subcellularLocation>
    <subcellularLocation>
        <location evidence="4">Presynaptic cell membrane</location>
    </subcellularLocation>
    <text evidence="4 9 20">Localizes on the surface of cell somata, proximal dendrites and axonal membranes. Also detected throughout the neuropil. Localized in starburst cell somata and proximal dendrite processes. Colocalized with GABA in presynaptic terminals. Clustered in patches in somatic and proximal dendritic membrane as well as in axons and presnypatic terminals of GABAergic interneurons; some of these patches are found near postsynaptic sites (By similarity). Colocalizes with parvalbumin in globus pallidus neurons (PubMed:10482766). Localizes in thalamocortical axons and synapses (PubMed:7643197).</text>
</comment>
<comment type="subcellular location">
    <molecule>Isoform 1</molecule>
    <subcellularLocation>
        <location evidence="22">Apical cell membrane</location>
    </subcellularLocation>
</comment>
<comment type="subcellular location">
    <molecule>Isoform 2</molecule>
    <subcellularLocation>
        <location evidence="22">Apical cell membrane</location>
    </subcellularLocation>
</comment>
<comment type="subcellular location">
    <molecule>Isoform 3</molecule>
    <subcellularLocation>
        <location evidence="22">Basolateral cell membrane</location>
    </subcellularLocation>
</comment>
<comment type="alternative products">
    <event type="alternative splicing"/>
    <isoform>
        <id>P22462-1</id>
        <name>1</name>
        <name evidence="24">KV3.2B</name>
        <sequence type="displayed"/>
    </isoform>
    <isoform>
        <id>P22462-2</id>
        <name>2</name>
        <name evidence="24">KV3.2C</name>
        <sequence type="described" ref="VSP_001018"/>
    </isoform>
    <isoform>
        <id>P22462-3</id>
        <name>3</name>
        <name>KV3.2A</name>
        <name evidence="25">KShIIIA.1</name>
        <sequence type="described" ref="VSP_001019"/>
    </isoform>
    <isoform>
        <id>P22462-4</id>
        <name>4</name>
        <sequence type="described" ref="VSP_001020"/>
    </isoform>
</comment>
<comment type="tissue specificity">
    <text evidence="8 9 12 14 15 17 18 20 21">Expressed in neurons of the visual cortex during postnatal development (PubMed:18708127). Expressed in neurons of the globus pallidus at postnatal age day 7 (P7), onward (PubMed:10482766). Expressed in thalamic relay neurons. Expressed in neurons in layer IV and deeper cortical layers of the neocortex. Expressed in hippocampal interneurons (PubMed:7643197). Expressed in nonpyramidal interneurons in the basolateral amygdala (PubMed:16413129). Expressed in retinal ganglion cells (at protein level) (PubMed:22831914). Widely expressed in the brain (PubMed:1879548, PubMed:8120636). Expressed in numerous thalamic relay neurons throughout the dorsal thalamus. Expressed in interneurons of the deep layers V-VI of the cerebral cortex, the CA1 and CA3 pyramidal and dentate gyrus (DG) granule cells of the hippocampus, in neurons of the caudate-putamen, globus pallidus and subthalamic nucleus. Also expressed in the optic layer of interior colliculus, the inferior colliculus, the red nucleus, the medial geniculate, the ventral lateral lemiscus, the reticulotegmental nucleus and in the deep cerebellar nuclei (PubMed:1374908, PubMed:18708127, PubMed:7643197, PubMed:8120636). Expressed in globus pallidus (GP) neurons (PubMed:10414968).</text>
</comment>
<comment type="induction">
    <text evidence="15 16">Up-regulated in visual cortex during the second postnatal week from dark-reared animals (at protein level). Down-regulated in visual cortex by active visual experience until postnatal day P40 of dark-reared animals (PubMed:18708127). Down-regulated by chronic action potential activity deprivation in organotypic culture of the visual cortex (PubMed:18775767).</text>
</comment>
<comment type="domain">
    <text evidence="3">The transmembrane segment S4 functions as a voltage-sensor and is characterized by a series of positively charged amino acids at every third position. Channel opening and closing is effected by a conformation change that affects the position and orientation of the voltage-sensor paddle formed by S3 and S4 within the membrane. A transmembrane electric field that is positive inside would push the positively charged S4 segment outwards, thereby opening the pore, while a field that is negative inside would pull the S4 segment inwards and close the pore. Changes in the position and orientation of S4 are then transmitted to the activation gate formed by the inner helix bundle via the S4-S5 linker region.</text>
</comment>
<comment type="PTM">
    <text evidence="3 20">Phosphorylated by PKA in cortical synaptosomes (PubMed:7643197). cAMP-dependent phosphorylation inhibits channel activity (PubMed:7643197). Histamine H2 receptor- and PKA-induced phosphorylation extends action potential spike duration, reduces action potential spike amplitude, sustains maximum firing frequency in hippocampal interneurons; also reduces the incidence of high-frequency oscillations in hippocampal CA3 pyramidal cell layers (By similarity).</text>
</comment>
<comment type="similarity">
    <text evidence="26">Belongs to the potassium channel family. C (Shaw) (TC 1.A.1.2) subfamily. Kv3.2/KCNC2 sub-subfamily.</text>
</comment>
<proteinExistence type="evidence at protein level"/>
<sequence length="638" mass="70191">MGKIENNERVILNVGGTRHETYRSTLKTLPGTRLALLASSEPQGDCLTAAGDKLQPLPPPLSPPPRPPPLSPVPSGCFEGGAGNCSSHGGNGSDHPGGGREFFFDRHPGVFAYVLNYYRTGKLHCPADVCGPLFEEELAFWGIDETDVEPCCWMTYRQHRDAEEALDIFETPDLIGGDPGDDEDLGGKRLGIEDAAGLGGPDGKSGRWRKLQPRMWALFEDPYSSRAARFIAFASLFFILVSITTFCLETHEAFNIVKNKTEPVINGTSAVLQYEIETDPALTYVEGVCVVWFTFEFLVRIVFSPNKLEFIKNLLNIIDFVAILPFYLEVGLSGLSSKAAKDVLGFLRVVRFVRILRIFKLTRHFVGLRVLGHTLRASTNEFLLLIIFLALGVLIFATMIYYAERVGAQPNDPSASEHTQFKNIPIGFWWAVVTMTTLGYGDMYPQTWSGMLVGALCALAGVLTIAMPVPVIVNNFGMYYSLAMAKQKLPRKRKKHIPPAPLASSPTFCKTELNMACNSTQSDTCLGKENRLLEHNRSVLSGDDSTGSEPPLSPPERLPIRRSSTRDKNRRGETCFLLTTGDYTCASDGGIRKGYEKSRSLNNIAGLAGNALRLSPVTSPYNSPCPLRRSRSPIPSIL</sequence>
<evidence type="ECO:0000250" key="1"/>
<evidence type="ECO:0000250" key="2">
    <source>
        <dbReference type="UniProtKB" id="P48547"/>
    </source>
</evidence>
<evidence type="ECO:0000250" key="3">
    <source>
        <dbReference type="UniProtKB" id="P63142"/>
    </source>
</evidence>
<evidence type="ECO:0000250" key="4">
    <source>
        <dbReference type="UniProtKB" id="Q14B80"/>
    </source>
</evidence>
<evidence type="ECO:0000250" key="5">
    <source>
        <dbReference type="UniProtKB" id="Q96PR1"/>
    </source>
</evidence>
<evidence type="ECO:0000255" key="6"/>
<evidence type="ECO:0000256" key="7">
    <source>
        <dbReference type="SAM" id="MobiDB-lite"/>
    </source>
</evidence>
<evidence type="ECO:0000269" key="8">
    <source>
    </source>
</evidence>
<evidence type="ECO:0000269" key="9">
    <source>
    </source>
</evidence>
<evidence type="ECO:0000269" key="10">
    <source>
    </source>
</evidence>
<evidence type="ECO:0000269" key="11">
    <source>
    </source>
</evidence>
<evidence type="ECO:0000269" key="12">
    <source>
    </source>
</evidence>
<evidence type="ECO:0000269" key="13">
    <source>
    </source>
</evidence>
<evidence type="ECO:0000269" key="14">
    <source>
    </source>
</evidence>
<evidence type="ECO:0000269" key="15">
    <source>
    </source>
</evidence>
<evidence type="ECO:0000269" key="16">
    <source>
    </source>
</evidence>
<evidence type="ECO:0000269" key="17">
    <source>
    </source>
</evidence>
<evidence type="ECO:0000269" key="18">
    <source>
    </source>
</evidence>
<evidence type="ECO:0000269" key="19">
    <source>
    </source>
</evidence>
<evidence type="ECO:0000269" key="20">
    <source>
    </source>
</evidence>
<evidence type="ECO:0000269" key="21">
    <source>
    </source>
</evidence>
<evidence type="ECO:0000269" key="22">
    <source>
    </source>
</evidence>
<evidence type="ECO:0000303" key="23">
    <source>
    </source>
</evidence>
<evidence type="ECO:0000303" key="24">
    <source>
    </source>
</evidence>
<evidence type="ECO:0000303" key="25">
    <source>
    </source>
</evidence>
<evidence type="ECO:0000305" key="26"/>
<evidence type="ECO:0000305" key="27">
    <source>
    </source>
</evidence>
<evidence type="ECO:0000305" key="28">
    <source>
    </source>
</evidence>
<evidence type="ECO:0000312" key="29">
    <source>
        <dbReference type="RGD" id="628829"/>
    </source>
</evidence>
<dbReference type="EMBL" id="M34052">
    <property type="protein sequence ID" value="AAA42142.1"/>
    <property type="molecule type" value="mRNA"/>
</dbReference>
<dbReference type="EMBL" id="M59211">
    <property type="protein sequence ID" value="AAA41819.1"/>
    <property type="molecule type" value="mRNA"/>
</dbReference>
<dbReference type="EMBL" id="M59313">
    <property type="protein sequence ID" value="AAA41820.1"/>
    <property type="status" value="ALT_SEQ"/>
    <property type="molecule type" value="mRNA"/>
</dbReference>
<dbReference type="EMBL" id="X62839">
    <property type="protein sequence ID" value="CAA44643.1"/>
    <property type="molecule type" value="mRNA"/>
</dbReference>
<dbReference type="EMBL" id="M84203">
    <property type="protein sequence ID" value="AAA42143.1"/>
    <property type="molecule type" value="mRNA"/>
</dbReference>
<dbReference type="PIR" id="A39402">
    <property type="entry name" value="A39402"/>
</dbReference>
<dbReference type="PIR" id="B45292">
    <property type="entry name" value="B45292"/>
</dbReference>
<dbReference type="PIR" id="S22703">
    <property type="entry name" value="S22703"/>
</dbReference>
<dbReference type="RefSeq" id="NP_631962.1">
    <molecule id="P22462-3"/>
    <property type="nucleotide sequence ID" value="NM_139216.1"/>
</dbReference>
<dbReference type="RefSeq" id="NP_631963.1">
    <molecule id="P22462-1"/>
    <property type="nucleotide sequence ID" value="NM_139217.1"/>
</dbReference>
<dbReference type="RefSeq" id="XP_006241389.1">
    <molecule id="P22462-1"/>
    <property type="nucleotide sequence ID" value="XM_006241327.5"/>
</dbReference>
<dbReference type="RefSeq" id="XP_017450149.1">
    <molecule id="P22462-1"/>
    <property type="nucleotide sequence ID" value="XM_017594660.3"/>
</dbReference>
<dbReference type="RefSeq" id="XP_017450150.1">
    <molecule id="P22462-2"/>
    <property type="nucleotide sequence ID" value="XM_017594661.3"/>
</dbReference>
<dbReference type="RefSeq" id="XP_017450151.1">
    <molecule id="P22462-4"/>
    <property type="nucleotide sequence ID" value="XM_017594662.3"/>
</dbReference>
<dbReference type="RefSeq" id="XP_017450152.1">
    <property type="nucleotide sequence ID" value="XM_017594663.1"/>
</dbReference>
<dbReference type="RefSeq" id="XP_038934339.1">
    <molecule id="P22462-3"/>
    <property type="nucleotide sequence ID" value="XM_039078411.2"/>
</dbReference>
<dbReference type="SMR" id="P22462"/>
<dbReference type="BioGRID" id="251521">
    <property type="interactions" value="1"/>
</dbReference>
<dbReference type="CORUM" id="P22462"/>
<dbReference type="FunCoup" id="P22462">
    <property type="interactions" value="1203"/>
</dbReference>
<dbReference type="STRING" id="10116.ENSRNOP00000005773"/>
<dbReference type="DrugCentral" id="P22462"/>
<dbReference type="GuidetoPHARMACOLOGY" id="549"/>
<dbReference type="GlyCosmos" id="P22462">
    <property type="glycosylation" value="2 sites, No reported glycans"/>
</dbReference>
<dbReference type="GlyGen" id="P22462">
    <property type="glycosylation" value="2 sites"/>
</dbReference>
<dbReference type="PhosphoSitePlus" id="P22462"/>
<dbReference type="PaxDb" id="10116-ENSRNOP00000005773"/>
<dbReference type="ABCD" id="P22462">
    <property type="antibodies" value="3 sequenced antibodies"/>
</dbReference>
<dbReference type="Ensembl" id="ENSRNOT00000005690.5">
    <molecule id="P22462-3"/>
    <property type="protein sequence ID" value="ENSRNOP00000005690.2"/>
    <property type="gene ID" value="ENSRNOG00000004077.9"/>
</dbReference>
<dbReference type="Ensembl" id="ENSRNOT00000005773.8">
    <molecule id="P22462-1"/>
    <property type="protein sequence ID" value="ENSRNOP00000005773.4"/>
    <property type="gene ID" value="ENSRNOG00000004077.9"/>
</dbReference>
<dbReference type="Ensembl" id="ENSRNOT00000099049.1">
    <molecule id="P22462-2"/>
    <property type="protein sequence ID" value="ENSRNOP00000084708.1"/>
    <property type="gene ID" value="ENSRNOG00000004077.9"/>
</dbReference>
<dbReference type="Ensembl" id="ENSRNOT00000105247.1">
    <molecule id="P22462-4"/>
    <property type="protein sequence ID" value="ENSRNOP00000088724.1"/>
    <property type="gene ID" value="ENSRNOG00000004077.9"/>
</dbReference>
<dbReference type="GeneID" id="246153"/>
<dbReference type="KEGG" id="rno:246153"/>
<dbReference type="UCSC" id="RGD:628829">
    <molecule id="P22462-1"/>
    <property type="organism name" value="rat"/>
</dbReference>
<dbReference type="AGR" id="RGD:628829"/>
<dbReference type="CTD" id="3747"/>
<dbReference type="RGD" id="628829">
    <property type="gene designation" value="Kcnc2"/>
</dbReference>
<dbReference type="eggNOG" id="KOG3713">
    <property type="taxonomic scope" value="Eukaryota"/>
</dbReference>
<dbReference type="GeneTree" id="ENSGT00940000157371"/>
<dbReference type="HOGENOM" id="CLU_011722_4_3_1"/>
<dbReference type="InParanoid" id="P22462"/>
<dbReference type="OMA" id="ELNTACN"/>
<dbReference type="OrthoDB" id="10025005at2759"/>
<dbReference type="PhylomeDB" id="P22462"/>
<dbReference type="TreeFam" id="TF352511"/>
<dbReference type="Reactome" id="R-RNO-1296072">
    <property type="pathway name" value="Voltage gated Potassium channels"/>
</dbReference>
<dbReference type="Reactome" id="R-RNO-381676">
    <property type="pathway name" value="Glucagon-like Peptide-1 (GLP1) regulates insulin secretion"/>
</dbReference>
<dbReference type="PRO" id="PR:P22462"/>
<dbReference type="Proteomes" id="UP000002494">
    <property type="component" value="Chromosome 7"/>
</dbReference>
<dbReference type="Bgee" id="ENSRNOG00000004077">
    <property type="expression patterns" value="Expressed in frontal cortex and 3 other cell types or tissues"/>
</dbReference>
<dbReference type="GO" id="GO:0016324">
    <property type="term" value="C:apical plasma membrane"/>
    <property type="evidence" value="ECO:0000314"/>
    <property type="project" value="UniProtKB"/>
</dbReference>
<dbReference type="GO" id="GO:0030673">
    <property type="term" value="C:axolemma"/>
    <property type="evidence" value="ECO:0000314"/>
    <property type="project" value="RGD"/>
</dbReference>
<dbReference type="GO" id="GO:0030424">
    <property type="term" value="C:axon"/>
    <property type="evidence" value="ECO:0000314"/>
    <property type="project" value="UniProtKB"/>
</dbReference>
<dbReference type="GO" id="GO:0043679">
    <property type="term" value="C:axon terminus"/>
    <property type="evidence" value="ECO:0000318"/>
    <property type="project" value="GO_Central"/>
</dbReference>
<dbReference type="GO" id="GO:0016323">
    <property type="term" value="C:basolateral plasma membrane"/>
    <property type="evidence" value="ECO:0000314"/>
    <property type="project" value="RGD"/>
</dbReference>
<dbReference type="GO" id="GO:0044297">
    <property type="term" value="C:cell body"/>
    <property type="evidence" value="ECO:0000266"/>
    <property type="project" value="RGD"/>
</dbReference>
<dbReference type="GO" id="GO:0030425">
    <property type="term" value="C:dendrite"/>
    <property type="evidence" value="ECO:0000314"/>
    <property type="project" value="RGD"/>
</dbReference>
<dbReference type="GO" id="GO:0032590">
    <property type="term" value="C:dendrite membrane"/>
    <property type="evidence" value="ECO:0000318"/>
    <property type="project" value="GO_Central"/>
</dbReference>
<dbReference type="GO" id="GO:0098982">
    <property type="term" value="C:GABA-ergic synapse"/>
    <property type="evidence" value="ECO:0000314"/>
    <property type="project" value="SynGO"/>
</dbReference>
<dbReference type="GO" id="GO:0043231">
    <property type="term" value="C:intracellular membrane-bounded organelle"/>
    <property type="evidence" value="ECO:0000314"/>
    <property type="project" value="RGD"/>
</dbReference>
<dbReference type="GO" id="GO:0016020">
    <property type="term" value="C:membrane"/>
    <property type="evidence" value="ECO:0000314"/>
    <property type="project" value="RGD"/>
</dbReference>
<dbReference type="GO" id="GO:0043025">
    <property type="term" value="C:neuronal cell body"/>
    <property type="evidence" value="ECO:0000314"/>
    <property type="project" value="RGD"/>
</dbReference>
<dbReference type="GO" id="GO:0032809">
    <property type="term" value="C:neuronal cell body membrane"/>
    <property type="evidence" value="ECO:0000314"/>
    <property type="project" value="UniProtKB"/>
</dbReference>
<dbReference type="GO" id="GO:0043204">
    <property type="term" value="C:perikaryon"/>
    <property type="evidence" value="ECO:0000314"/>
    <property type="project" value="UniProtKB"/>
</dbReference>
<dbReference type="GO" id="GO:0005886">
    <property type="term" value="C:plasma membrane"/>
    <property type="evidence" value="ECO:0000314"/>
    <property type="project" value="UniProtKB"/>
</dbReference>
<dbReference type="GO" id="GO:0045211">
    <property type="term" value="C:postsynaptic membrane"/>
    <property type="evidence" value="ECO:0000250"/>
    <property type="project" value="UniProtKB"/>
</dbReference>
<dbReference type="GO" id="GO:0042734">
    <property type="term" value="C:presynaptic membrane"/>
    <property type="evidence" value="ECO:0000314"/>
    <property type="project" value="SynGO"/>
</dbReference>
<dbReference type="GO" id="GO:0045202">
    <property type="term" value="C:synapse"/>
    <property type="evidence" value="ECO:0000314"/>
    <property type="project" value="UniProtKB"/>
</dbReference>
<dbReference type="GO" id="GO:0043195">
    <property type="term" value="C:terminal bouton"/>
    <property type="evidence" value="ECO:0000314"/>
    <property type="project" value="RGD"/>
</dbReference>
<dbReference type="GO" id="GO:0031982">
    <property type="term" value="C:vesicle"/>
    <property type="evidence" value="ECO:0000314"/>
    <property type="project" value="RGD"/>
</dbReference>
<dbReference type="GO" id="GO:0008076">
    <property type="term" value="C:voltage-gated potassium channel complex"/>
    <property type="evidence" value="ECO:0000314"/>
    <property type="project" value="UniProtKB"/>
</dbReference>
<dbReference type="GO" id="GO:0005251">
    <property type="term" value="F:delayed rectifier potassium channel activity"/>
    <property type="evidence" value="ECO:0000314"/>
    <property type="project" value="UniProtKB"/>
</dbReference>
<dbReference type="GO" id="GO:0046872">
    <property type="term" value="F:metal ion binding"/>
    <property type="evidence" value="ECO:0007669"/>
    <property type="project" value="UniProtKB-KW"/>
</dbReference>
<dbReference type="GO" id="GO:0044325">
    <property type="term" value="F:transmembrane transporter binding"/>
    <property type="evidence" value="ECO:0000353"/>
    <property type="project" value="UniProtKB"/>
</dbReference>
<dbReference type="GO" id="GO:0099508">
    <property type="term" value="F:voltage-gated monoatomic ion channel activity involved in regulation of presynaptic membrane potential"/>
    <property type="evidence" value="ECO:0000314"/>
    <property type="project" value="SynGO"/>
</dbReference>
<dbReference type="GO" id="GO:0005249">
    <property type="term" value="F:voltage-gated potassium channel activity"/>
    <property type="evidence" value="ECO:0000314"/>
    <property type="project" value="UniProtKB"/>
</dbReference>
<dbReference type="GO" id="GO:0001508">
    <property type="term" value="P:action potential"/>
    <property type="evidence" value="ECO:0000266"/>
    <property type="project" value="RGD"/>
</dbReference>
<dbReference type="GO" id="GO:0071242">
    <property type="term" value="P:cellular response to ammonium ion"/>
    <property type="evidence" value="ECO:0000270"/>
    <property type="project" value="RGD"/>
</dbReference>
<dbReference type="GO" id="GO:0071732">
    <property type="term" value="P:cellular response to nitric oxide"/>
    <property type="evidence" value="ECO:0000314"/>
    <property type="project" value="UniProtKB"/>
</dbReference>
<dbReference type="GO" id="GO:0097237">
    <property type="term" value="P:cellular response to toxic substance"/>
    <property type="evidence" value="ECO:0000315"/>
    <property type="project" value="RGD"/>
</dbReference>
<dbReference type="GO" id="GO:0021759">
    <property type="term" value="P:globus pallidus development"/>
    <property type="evidence" value="ECO:0000270"/>
    <property type="project" value="RGD"/>
</dbReference>
<dbReference type="GO" id="GO:0060081">
    <property type="term" value="P:membrane hyperpolarization"/>
    <property type="evidence" value="ECO:0000250"/>
    <property type="project" value="UniProtKB"/>
</dbReference>
<dbReference type="GO" id="GO:0034220">
    <property type="term" value="P:monoatomic ion transmembrane transport"/>
    <property type="evidence" value="ECO:0000314"/>
    <property type="project" value="RGD"/>
</dbReference>
<dbReference type="GO" id="GO:0038060">
    <property type="term" value="P:nitric oxide-cGMP-mediated signaling"/>
    <property type="evidence" value="ECO:0000314"/>
    <property type="project" value="UniProtKB"/>
</dbReference>
<dbReference type="GO" id="GO:0021554">
    <property type="term" value="P:optic nerve development"/>
    <property type="evidence" value="ECO:0000270"/>
    <property type="project" value="RGD"/>
</dbReference>
<dbReference type="GO" id="GO:1901381">
    <property type="term" value="P:positive regulation of potassium ion transmembrane transport"/>
    <property type="evidence" value="ECO:0000314"/>
    <property type="project" value="RGD"/>
</dbReference>
<dbReference type="GO" id="GO:0071805">
    <property type="term" value="P:potassium ion transmembrane transport"/>
    <property type="evidence" value="ECO:0000314"/>
    <property type="project" value="UniProtKB"/>
</dbReference>
<dbReference type="GO" id="GO:0006813">
    <property type="term" value="P:potassium ion transport"/>
    <property type="evidence" value="ECO:0000314"/>
    <property type="project" value="UniProtKB"/>
</dbReference>
<dbReference type="GO" id="GO:0051291">
    <property type="term" value="P:protein heterooligomerization"/>
    <property type="evidence" value="ECO:0000314"/>
    <property type="project" value="UniProtKB"/>
</dbReference>
<dbReference type="GO" id="GO:0051260">
    <property type="term" value="P:protein homooligomerization"/>
    <property type="evidence" value="ECO:0000314"/>
    <property type="project" value="UniProtKB"/>
</dbReference>
<dbReference type="GO" id="GO:0099605">
    <property type="term" value="P:regulation of action potential firing rate"/>
    <property type="evidence" value="ECO:0000250"/>
    <property type="project" value="UniProtKB"/>
</dbReference>
<dbReference type="GO" id="GO:0014075">
    <property type="term" value="P:response to amine"/>
    <property type="evidence" value="ECO:0000270"/>
    <property type="project" value="RGD"/>
</dbReference>
<dbReference type="GO" id="GO:0045471">
    <property type="term" value="P:response to ethanol"/>
    <property type="evidence" value="ECO:0000270"/>
    <property type="project" value="RGD"/>
</dbReference>
<dbReference type="GO" id="GO:1904373">
    <property type="term" value="P:response to kainic acid"/>
    <property type="evidence" value="ECO:0000270"/>
    <property type="project" value="RGD"/>
</dbReference>
<dbReference type="GO" id="GO:0009642">
    <property type="term" value="P:response to light intensity"/>
    <property type="evidence" value="ECO:0000270"/>
    <property type="project" value="RGD"/>
</dbReference>
<dbReference type="GO" id="GO:0032026">
    <property type="term" value="P:response to magnesium ion"/>
    <property type="evidence" value="ECO:0000270"/>
    <property type="project" value="RGD"/>
</dbReference>
<dbReference type="GO" id="GO:1990089">
    <property type="term" value="P:response to nerve growth factor"/>
    <property type="evidence" value="ECO:0000270"/>
    <property type="project" value="RGD"/>
</dbReference>
<dbReference type="GO" id="GO:0009636">
    <property type="term" value="P:response to toxic substance"/>
    <property type="evidence" value="ECO:0000270"/>
    <property type="project" value="RGD"/>
</dbReference>
<dbReference type="CDD" id="cd18415">
    <property type="entry name" value="BTB_KCNC2_4"/>
    <property type="match status" value="1"/>
</dbReference>
<dbReference type="FunFam" id="1.10.287.70:FF:000011">
    <property type="entry name" value="Potassium channel, voltage-gated Shaw-related subfamily C, member 4"/>
    <property type="match status" value="1"/>
</dbReference>
<dbReference type="FunFam" id="1.20.120.350:FF:000014">
    <property type="entry name" value="Potassium channel, voltage-gated Shaw-related subfamily C, member 4"/>
    <property type="match status" value="1"/>
</dbReference>
<dbReference type="FunFam" id="3.30.710.10:FF:000002">
    <property type="entry name" value="Potassium voltage-gated channel subfamily C member 2"/>
    <property type="match status" value="1"/>
</dbReference>
<dbReference type="Gene3D" id="1.10.287.70">
    <property type="match status" value="1"/>
</dbReference>
<dbReference type="Gene3D" id="3.30.710.10">
    <property type="entry name" value="Potassium Channel Kv1.1, Chain A"/>
    <property type="match status" value="1"/>
</dbReference>
<dbReference type="Gene3D" id="1.20.120.350">
    <property type="entry name" value="Voltage-gated potassium channels. Chain C"/>
    <property type="match status" value="1"/>
</dbReference>
<dbReference type="InterPro" id="IPR000210">
    <property type="entry name" value="BTB/POZ_dom"/>
</dbReference>
<dbReference type="InterPro" id="IPR005821">
    <property type="entry name" value="Ion_trans_dom"/>
</dbReference>
<dbReference type="InterPro" id="IPR003968">
    <property type="entry name" value="K_chnl_volt-dep_Kv"/>
</dbReference>
<dbReference type="InterPro" id="IPR003974">
    <property type="entry name" value="K_chnl_volt-dep_Kv3"/>
</dbReference>
<dbReference type="InterPro" id="IPR011333">
    <property type="entry name" value="SKP1/BTB/POZ_sf"/>
</dbReference>
<dbReference type="InterPro" id="IPR003131">
    <property type="entry name" value="T1-type_BTB"/>
</dbReference>
<dbReference type="InterPro" id="IPR028325">
    <property type="entry name" value="VG_K_chnl"/>
</dbReference>
<dbReference type="InterPro" id="IPR027359">
    <property type="entry name" value="Volt_channel_dom_sf"/>
</dbReference>
<dbReference type="PANTHER" id="PTHR11537:SF172">
    <property type="entry name" value="POTASSIUM VOLTAGE-GATED CHANNEL SUBFAMILY C MEMBER 2"/>
    <property type="match status" value="1"/>
</dbReference>
<dbReference type="PANTHER" id="PTHR11537">
    <property type="entry name" value="VOLTAGE-GATED POTASSIUM CHANNEL"/>
    <property type="match status" value="1"/>
</dbReference>
<dbReference type="Pfam" id="PF02214">
    <property type="entry name" value="BTB_2"/>
    <property type="match status" value="1"/>
</dbReference>
<dbReference type="Pfam" id="PF00520">
    <property type="entry name" value="Ion_trans"/>
    <property type="match status" value="1"/>
</dbReference>
<dbReference type="PRINTS" id="PR00169">
    <property type="entry name" value="KCHANNEL"/>
</dbReference>
<dbReference type="PRINTS" id="PR01491">
    <property type="entry name" value="KVCHANNEL"/>
</dbReference>
<dbReference type="PRINTS" id="PR01498">
    <property type="entry name" value="SHAWCHANNEL"/>
</dbReference>
<dbReference type="SMART" id="SM00225">
    <property type="entry name" value="BTB"/>
    <property type="match status" value="1"/>
</dbReference>
<dbReference type="SUPFAM" id="SSF54695">
    <property type="entry name" value="POZ domain"/>
    <property type="match status" value="1"/>
</dbReference>
<dbReference type="SUPFAM" id="SSF81324">
    <property type="entry name" value="Voltage-gated potassium channels"/>
    <property type="match status" value="1"/>
</dbReference>
<organism>
    <name type="scientific">Rattus norvegicus</name>
    <name type="common">Rat</name>
    <dbReference type="NCBI Taxonomy" id="10116"/>
    <lineage>
        <taxon>Eukaryota</taxon>
        <taxon>Metazoa</taxon>
        <taxon>Chordata</taxon>
        <taxon>Craniata</taxon>
        <taxon>Vertebrata</taxon>
        <taxon>Euteleostomi</taxon>
        <taxon>Mammalia</taxon>
        <taxon>Eutheria</taxon>
        <taxon>Euarchontoglires</taxon>
        <taxon>Glires</taxon>
        <taxon>Rodentia</taxon>
        <taxon>Myomorpha</taxon>
        <taxon>Muroidea</taxon>
        <taxon>Muridae</taxon>
        <taxon>Murinae</taxon>
        <taxon>Rattus</taxon>
    </lineage>
</organism>
<name>KCNC2_RAT</name>
<feature type="chain" id="PRO_0000054054" description="Voltage-gated potassium channel KCNC2">
    <location>
        <begin position="1"/>
        <end position="638"/>
    </location>
</feature>
<feature type="topological domain" description="Cytoplasmic" evidence="6">
    <location>
        <begin position="1"/>
        <end position="229"/>
    </location>
</feature>
<feature type="transmembrane region" description="Helical; Name=Segment S1" evidence="6">
    <location>
        <begin position="230"/>
        <end position="248"/>
    </location>
</feature>
<feature type="transmembrane region" description="Helical; Name=Segment S2" evidence="6">
    <location>
        <begin position="284"/>
        <end position="303"/>
    </location>
</feature>
<feature type="topological domain" description="Cytoplasmic" evidence="6">
    <location>
        <begin position="304"/>
        <end position="314"/>
    </location>
</feature>
<feature type="transmembrane region" description="Helical; Name=Segment S3" evidence="6">
    <location>
        <begin position="315"/>
        <end position="337"/>
    </location>
</feature>
<feature type="transmembrane region" description="Helical; Voltage-sensor; Name=Segment S4" evidence="6">
    <location>
        <begin position="346"/>
        <end position="368"/>
    </location>
</feature>
<feature type="topological domain" description="Cytoplasmic" evidence="6">
    <location>
        <begin position="369"/>
        <end position="381"/>
    </location>
</feature>
<feature type="transmembrane region" description="Helical; Name=Segment S5" evidence="6">
    <location>
        <begin position="382"/>
        <end position="401"/>
    </location>
</feature>
<feature type="transmembrane region" description="Helical; Name=Segment S6" evidence="6">
    <location>
        <begin position="451"/>
        <end position="473"/>
    </location>
</feature>
<feature type="topological domain" description="Cytoplasmic" evidence="6">
    <location>
        <begin position="474"/>
        <end position="638"/>
    </location>
</feature>
<feature type="region of interest" description="Disordered" evidence="7">
    <location>
        <begin position="47"/>
        <end position="75"/>
    </location>
</feature>
<feature type="region of interest" description="Disordered" evidence="7">
    <location>
        <begin position="538"/>
        <end position="572"/>
    </location>
</feature>
<feature type="short sequence motif" description="Selectivity filter" evidence="1">
    <location>
        <begin position="437"/>
        <end position="442"/>
    </location>
</feature>
<feature type="compositionally biased region" description="Pro residues" evidence="7">
    <location>
        <begin position="56"/>
        <end position="72"/>
    </location>
</feature>
<feature type="binding site" evidence="2">
    <location>
        <position position="124"/>
    </location>
    <ligand>
        <name>Zn(2+)</name>
        <dbReference type="ChEBI" id="CHEBI:29105"/>
    </ligand>
</feature>
<feature type="binding site" evidence="2">
    <location>
        <position position="130"/>
    </location>
    <ligand>
        <name>Zn(2+)</name>
        <dbReference type="ChEBI" id="CHEBI:29105"/>
    </ligand>
</feature>
<feature type="binding site" evidence="2">
    <location>
        <position position="151"/>
    </location>
    <ligand>
        <name>Zn(2+)</name>
        <dbReference type="ChEBI" id="CHEBI:29105"/>
    </ligand>
</feature>
<feature type="binding site" evidence="2">
    <location>
        <position position="152"/>
    </location>
    <ligand>
        <name>Zn(2+)</name>
        <dbReference type="ChEBI" id="CHEBI:29105"/>
    </ligand>
</feature>
<feature type="binding site" evidence="2">
    <location>
        <position position="437"/>
    </location>
    <ligand>
        <name>K(+)</name>
        <dbReference type="ChEBI" id="CHEBI:29103"/>
        <note>ligand shared between homotetrameric partners</note>
    </ligand>
</feature>
<feature type="binding site" evidence="2">
    <location>
        <position position="438"/>
    </location>
    <ligand>
        <name>K(+)</name>
        <dbReference type="ChEBI" id="CHEBI:29103"/>
        <note>ligand shared between homotetrameric partners</note>
    </ligand>
</feature>
<feature type="binding site" evidence="2">
    <location>
        <position position="439"/>
    </location>
    <ligand>
        <name>K(+)</name>
        <dbReference type="ChEBI" id="CHEBI:29103"/>
        <note>ligand shared between homotetrameric partners</note>
    </ligand>
</feature>
<feature type="binding site" evidence="2">
    <location>
        <position position="440"/>
    </location>
    <ligand>
        <name>K(+)</name>
        <dbReference type="ChEBI" id="CHEBI:29103"/>
        <note>ligand shared between homotetrameric partners</note>
    </ligand>
</feature>
<feature type="modified residue" description="Phosphoserine; by PKA" evidence="6">
    <location>
        <position position="564"/>
    </location>
</feature>
<feature type="modified residue" description="Phosphoserine" evidence="4">
    <location>
        <position position="600"/>
    </location>
</feature>
<feature type="glycosylation site" description="N-linked (GlcNAc...) asparagine" evidence="6">
    <location>
        <position position="259"/>
    </location>
</feature>
<feature type="glycosylation site" description="N-linked (GlcNAc...) asparagine" evidence="6">
    <location>
        <position position="266"/>
    </location>
</feature>
<feature type="splice variant" id="VSP_001018" description="In isoform 2." evidence="24">
    <original>GYEKSRSLNNIAGLAGNALRLSPVTSPYNSPCPLRRSRSPIPSIL</original>
    <variation>ASTLEPMESTSQTKGDTRPEAHWNCAHLLNFGCPTGSSFPTL</variation>
    <location>
        <begin position="594"/>
        <end position="638"/>
    </location>
</feature>
<feature type="splice variant" id="VSP_001019" description="In isoform 3." evidence="25">
    <original>GYEKSRSLNNIAGLAGNALRLSPVTSPYNSPCPLRRSRSPIPSIL</original>
    <variation>DNCKDVVITGYTQAEARSLT</variation>
    <location>
        <begin position="594"/>
        <end position="638"/>
    </location>
</feature>
<feature type="splice variant" id="VSP_001020" description="In isoform 4." evidence="23">
    <original>GYEKSRSLNNIAGLAGNALRLSPVTSPYNSPCPLRRSRSPIPSIL</original>
    <variation>VLYRIYHGFLPAENGTLRFSHSKDCTGNFCY</variation>
    <location>
        <begin position="594"/>
        <end position="638"/>
    </location>
</feature>
<feature type="mutagenesis site" description="Does not abolish channel activity inhibition in presence of nitric oxide (NO); when associated with A-564. Absence of channel activity inhibition in presence of cAMP; when associated with A-564." evidence="10 20">
    <original>S</original>
    <variation>A</variation>
    <location>
        <position position="563"/>
    </location>
</feature>
<feature type="mutagenesis site" description="Does not abolish channel activity inhibition in presence of nitric oxide (NO); when associated with A-564. Absence of channel activity inhibition in presence of cAMP; when associated with A-563." evidence="10 20">
    <original>S</original>
    <variation>A</variation>
    <location>
        <position position="564"/>
    </location>
</feature>
<feature type="sequence conflict" description="In Ref. 4; CAA44643." evidence="26" ref="4">
    <original>G</original>
    <variation>S</variation>
    <location>
        <position position="2"/>
    </location>
</feature>
<keyword id="KW-0025">Alternative splicing</keyword>
<keyword id="KW-1003">Cell membrane</keyword>
<keyword id="KW-0966">Cell projection</keyword>
<keyword id="KW-0325">Glycoprotein</keyword>
<keyword id="KW-0407">Ion channel</keyword>
<keyword id="KW-0406">Ion transport</keyword>
<keyword id="KW-0472">Membrane</keyword>
<keyword id="KW-0479">Metal-binding</keyword>
<keyword id="KW-0597">Phosphoprotein</keyword>
<keyword id="KW-0628">Postsynaptic cell membrane</keyword>
<keyword id="KW-0630">Potassium</keyword>
<keyword id="KW-0631">Potassium channel</keyword>
<keyword id="KW-0633">Potassium transport</keyword>
<keyword id="KW-1185">Reference proteome</keyword>
<keyword id="KW-0770">Synapse</keyword>
<keyword id="KW-0771">Synaptosome</keyword>
<keyword id="KW-0812">Transmembrane</keyword>
<keyword id="KW-1133">Transmembrane helix</keyword>
<keyword id="KW-0813">Transport</keyword>
<keyword id="KW-0851">Voltage-gated channel</keyword>
<keyword id="KW-0862">Zinc</keyword>
<reference key="1">
    <citation type="journal article" date="1990" name="Proc. Natl. Acad. Sci. U.S.A.">
        <title>Molecular cloning of a member of a third class of Shaker-family K+ channel genes in mammals.</title>
        <authorList>
            <person name="McCormack T."/>
            <person name="de Miera E.C.V.-S."/>
            <person name="Rudy B."/>
        </authorList>
    </citation>
    <scope>NUCLEOTIDE SEQUENCE [MRNA] (ISOFORM 3)</scope>
    <scope>FUNCTION</scope>
    <scope>TRANSPORTER ACTIVITY</scope>
    <scope>BIOPHYSICOCHEMICAL PROPERTIES</scope>
    <scope>ACTIVITY REGULATION</scope>
    <source>
        <tissue>Brain</tissue>
    </source>
</reference>
<reference key="2">
    <citation type="journal article" date="1991" name="Proc. Natl. Acad. Sci. U.S.A.">
        <title>Molecular cloning of a member of a third class of Shaker-family K+ channel genes in mammals.</title>
        <authorList>
            <person name="McCormack T."/>
            <person name="de Miera E.C.V.-S."/>
            <person name="Rudy B."/>
        </authorList>
    </citation>
    <scope>SEQUENCE REVISION</scope>
</reference>
<reference key="3">
    <citation type="journal article" date="1991" name="FEBS Lett.">
        <title>Shaw-like rat brain potassium channel cDNA's with divergent 3' ends.</title>
        <authorList>
            <person name="Luneau C.J."/>
            <person name="Wiedmann R."/>
            <person name="Smith J.S."/>
            <person name="Williams J.B."/>
        </authorList>
    </citation>
    <scope>NUCLEOTIDE SEQUENCE [MRNA] (ISOFORMS 1 AND 2)</scope>
    <scope>FUNCTION</scope>
    <scope>TRANSPORTER ACTIVITY</scope>
    <scope>BIOPHYSICOCHEMICAL PROPERTIES</scope>
    <scope>ACTIVITY REGULATION</scope>
    <scope>TISSUE SPECIFICITY</scope>
    <source>
        <tissue>Brain</tissue>
    </source>
</reference>
<reference key="4">
    <citation type="journal article" date="1992" name="EMBO J.">
        <title>Characterization of a Shaw-related potassium channel family in rat brain.</title>
        <authorList>
            <person name="Rettig J."/>
            <person name="Wunder F."/>
            <person name="Stocker M."/>
            <person name="Lichtinghagen R."/>
            <person name="Mastiaux F."/>
            <person name="Beckh S."/>
            <person name="Kues W."/>
            <person name="Pedarzani P."/>
            <person name="Schroeter K.H."/>
            <person name="Ruppersberg J.P."/>
            <person name="Veh R."/>
            <person name="Pongs O."/>
        </authorList>
    </citation>
    <scope>NUCLEOTIDE SEQUENCE [MRNA] (ISOFORM 4)</scope>
</reference>
<reference key="5">
    <citation type="journal article" date="1992" name="Proc. Natl. Acad. Sci. U.S.A.">
        <title>Region-specific expression of a K+ channel gene in brain.</title>
        <authorList>
            <person name="Baker H."/>
            <person name="Pollock J."/>
            <person name="Ellisman M."/>
            <person name="Kentros C."/>
            <person name="Miera E."/>
            <person name="Serodio P."/>
            <person name="Weiser M."/>
            <person name="Rudy B."/>
            <person name="Fruhling D."/>
        </authorList>
    </citation>
    <scope>NUCLEOTIDE SEQUENCE [MRNA] (ISOFORM 1)</scope>
    <scope>TISSUE SPECIFICITY</scope>
</reference>
<reference key="6">
    <citation type="journal article" date="1994" name="J. Neurosci.">
        <title>Differential expression of Shaw-related K+ channels in the rat central nervous system.</title>
        <authorList>
            <person name="Weiser M."/>
            <person name="Vega-Saenz de Miera E."/>
            <person name="Kentros C."/>
            <person name="Moreno H."/>
            <person name="Franzen L."/>
            <person name="Hillman D."/>
            <person name="Baker H."/>
            <person name="Rudy B."/>
        </authorList>
    </citation>
    <scope>FUNCTION</scope>
    <scope>TRANSPORTER ACTIVITY</scope>
    <scope>BIOPHYSICOCHEMICAL PROPERTIES</scope>
    <scope>TISSUE SPECIFICITY</scope>
</reference>
<reference key="7">
    <citation type="journal article" date="1995" name="J. Neurosci.">
        <title>Thalamocortical projections have a K+ channel that is phosphorylated and modulated by cAMP-dependent protein kinase.</title>
        <authorList>
            <person name="Moreno H."/>
            <person name="Kentros C."/>
            <person name="Bueno E."/>
            <person name="Weiser M."/>
            <person name="Hernandez A."/>
            <person name="Vega-Saenz de Miera E."/>
            <person name="Ponce A."/>
            <person name="Thornhill W."/>
            <person name="Rudy B."/>
        </authorList>
    </citation>
    <scope>FUNCTION</scope>
    <scope>TRANSPORTER ACTIVITY</scope>
    <scope>BIOPHYSICOCHEMICAL PROPERTIES</scope>
    <scope>ACTIVITY REGULATION</scope>
    <scope>PHOSPHORYLATION</scope>
    <scope>MUTAGENESIS OF SER-563 AND SER-564</scope>
    <scope>SUBCELLULAR LOCATION</scope>
    <scope>TISSUE SPECIFICITY</scope>
</reference>
<reference key="8">
    <citation type="journal article" date="1997" name="J. Membr. Biol.">
        <title>K+ channel subunit isoforms with divergent carboxy-terminal sequences carry distinct membrane targeting signals.</title>
        <authorList>
            <person name="Ponce A."/>
            <person name="Vega-Saenz de Miera E."/>
            <person name="Kentros C."/>
            <person name="Moreno H."/>
            <person name="Thornhill B."/>
            <person name="Rudy B."/>
        </authorList>
    </citation>
    <scope>SUBCELLULAR LOCATION (ISOFORMS 1; 2 AND 3)</scope>
</reference>
<reference key="9">
    <citation type="journal article" date="1999" name="J. Neurophysiol.">
        <title>Kv3.1-Kv3.2 channels underlie a high-voltage-activating component of the delayed rectifier K+ current in projecting neurons from the globus pallidus.</title>
        <authorList>
            <person name="Hernandez-Pineda R."/>
            <person name="Chow A."/>
            <person name="Amarillo Y."/>
            <person name="Moreno H."/>
            <person name="Saganich M."/>
            <person name="Vega-Saenz de Miera E.C."/>
            <person name="Hernandez-Cruz A."/>
            <person name="Rudy B."/>
        </authorList>
    </citation>
    <scope>FUNCTION</scope>
    <scope>TRANSPORTER ACTIVITY</scope>
    <scope>BIOPHYSICOCHEMICAL PROPERTIES</scope>
    <scope>ACTIVITY REGULATION</scope>
    <scope>SUBUNIT</scope>
    <scope>INTERACTION WITH KCNC1</scope>
    <scope>SUBCELLULAR LOCATION</scope>
    <scope>TISSUE SPECIFICITY</scope>
</reference>
<reference key="10">
    <citation type="journal article" date="1999" name="J. Neurosci.">
        <title>Delayed rectifier currents in rat globus pallidus neurons are attributable to Kv2.1 and Kv3.1/3.2 K(+) channels.</title>
        <authorList>
            <person name="Baranauskas G."/>
            <person name="Tkatch T."/>
            <person name="Surmeier D.J."/>
        </authorList>
    </citation>
    <scope>FUNCTION</scope>
    <scope>SUBCELLULAR LOCATION</scope>
    <scope>TISSUE SPECIFICITY</scope>
</reference>
<reference key="11">
    <citation type="journal article" date="1999" name="Ann. N. Y. Acad. Sci.">
        <title>Contributions of Kv3 channels to neuronal excitability.</title>
        <authorList>
            <person name="Rudy B."/>
            <person name="Chow A."/>
            <person name="Lau D."/>
            <person name="Amarillo Y."/>
            <person name="Ozaita A."/>
            <person name="Saganich M."/>
            <person name="Moreno H."/>
            <person name="Nadal M.S."/>
            <person name="Hernandez-Pineda R."/>
            <person name="Hernandez-Cruz A."/>
            <person name="Erisir A."/>
            <person name="Leonard C."/>
            <person name="Vega-Saenz de Miera E."/>
        </authorList>
    </citation>
    <scope>REVIEW</scope>
</reference>
<reference key="12">
    <citation type="journal article" date="2001" name="Trends Neurosci.">
        <title>Kv3 channels: voltage-gated K+ channels designed for high-frequency repetitive firing.</title>
        <authorList>
            <person name="Rudy B."/>
            <person name="McBain C.J."/>
        </authorList>
    </citation>
    <scope>REVIEW</scope>
</reference>
<reference key="13">
    <citation type="journal article" date="2001" name="J. Physiol. (Lond.)">
        <title>Modulation of Kv3 potassium channels expressed in CHO cells by a nitric oxide-activated phosphatase.</title>
        <authorList>
            <person name="Moreno H."/>
            <person name="Vega-Saenz de Miera E."/>
            <person name="Nadal M.S."/>
            <person name="Amarillo Y."/>
            <person name="Rudy B."/>
        </authorList>
    </citation>
    <scope>FUNCTION</scope>
    <scope>TRANSPORTER ACTIVITY</scope>
    <scope>BIOPHYSICOCHEMICAL PROPERTIES</scope>
    <scope>SUBCELLULAR LOCATION</scope>
    <scope>MUTAGENESIS OF SER-563 AND SER-564</scope>
</reference>
<reference key="14">
    <citation type="journal article" date="2004" name="J. Biol. Chem.">
        <title>MinK, MiRP1, and MiRP2 diversify Kv3.1 and Kv3.2 potassium channel gating.</title>
        <authorList>
            <person name="Lewis A."/>
            <person name="McCrossan Z.A."/>
            <person name="Abbott G.W."/>
        </authorList>
    </citation>
    <scope>FUNCTION</scope>
    <scope>TRANSPORTER ACTIVITY</scope>
    <scope>BIOPHYSICOCHEMICAL PROPERTIES</scope>
    <scope>SUBUNIT</scope>
    <scope>INTERACTION WITH KCNC1; KCNE1; KCNE2 AND KCNE3</scope>
    <scope>SUBCELLULAR LOCATION</scope>
</reference>
<reference key="15">
    <citation type="journal article" date="2006" name="Neuroscience">
        <title>Differential expression of Kv3.1b and Kv3.2 potassium channel subunits in interneurons of the basolateral amygdala.</title>
        <authorList>
            <person name="McDonald A.J."/>
            <person name="Mascagni F."/>
        </authorList>
    </citation>
    <scope>TISSUE SPECIFICITY</scope>
</reference>
<reference key="16">
    <citation type="journal article" date="2008" name="Neuroscience">
        <title>Neuronal activity and TrkB ligands influence Kv3.1b and Kv3.2 expression in developing cortical interneurons.</title>
        <authorList>
            <person name="Grabert J."/>
            <person name="Wahle P."/>
        </authorList>
    </citation>
    <scope>INDUCTION</scope>
</reference>
<reference key="17">
    <citation type="journal article" date="2009" name="Neuroscience">
        <title>Visual experience regulates Kv3.1b and Kv3.2 expression in developing rat visual cortex.</title>
        <authorList>
            <person name="Grabert J."/>
            <person name="Wahle P."/>
        </authorList>
    </citation>
    <scope>TISSUE SPECIFICITY</scope>
    <scope>INDUCTION</scope>
</reference>
<reference key="18">
    <citation type="journal article" date="2012" name="Cell Calcium">
        <title>Kv3 channels modulate calcium signals induced by fast firing patterns in the rat retinal ganglion cells.</title>
        <authorList>
            <person name="Kuznetsov K.I."/>
            <person name="Grygorov O.O."/>
            <person name="Maslov V.Y."/>
            <person name="Veselovsky N.S."/>
            <person name="Fedulova S.A."/>
        </authorList>
    </citation>
    <scope>FUNCTION</scope>
    <scope>SUBCELLULAR LOCATION</scope>
    <scope>TISSUE SPECIFICITY</scope>
</reference>